<protein>
    <recommendedName>
        <fullName evidence="1">N-succinylarginine dihydrolase</fullName>
        <ecNumber evidence="1">3.5.3.23</ecNumber>
    </recommendedName>
</protein>
<keyword id="KW-0056">Arginine metabolism</keyword>
<keyword id="KW-0378">Hydrolase</keyword>
<name>ASTB_ECOLC</name>
<feature type="chain" id="PRO_1000085393" description="N-succinylarginine dihydrolase">
    <location>
        <begin position="1"/>
        <end position="447"/>
    </location>
</feature>
<feature type="active site" evidence="1">
    <location>
        <position position="174"/>
    </location>
</feature>
<feature type="active site" evidence="1">
    <location>
        <position position="248"/>
    </location>
</feature>
<feature type="active site" description="Nucleophile" evidence="1">
    <location>
        <position position="365"/>
    </location>
</feature>
<feature type="binding site" evidence="1">
    <location>
        <begin position="19"/>
        <end position="28"/>
    </location>
    <ligand>
        <name>substrate</name>
    </ligand>
</feature>
<feature type="binding site" evidence="1">
    <location>
        <position position="110"/>
    </location>
    <ligand>
        <name>substrate</name>
    </ligand>
</feature>
<feature type="binding site" evidence="1">
    <location>
        <begin position="137"/>
        <end position="138"/>
    </location>
    <ligand>
        <name>substrate</name>
    </ligand>
</feature>
<feature type="binding site" evidence="1">
    <location>
        <position position="212"/>
    </location>
    <ligand>
        <name>substrate</name>
    </ligand>
</feature>
<feature type="binding site" evidence="1">
    <location>
        <position position="250"/>
    </location>
    <ligand>
        <name>substrate</name>
    </ligand>
</feature>
<feature type="binding site" evidence="1">
    <location>
        <position position="359"/>
    </location>
    <ligand>
        <name>substrate</name>
    </ligand>
</feature>
<accession>B1IPI5</accession>
<dbReference type="EC" id="3.5.3.23" evidence="1"/>
<dbReference type="EMBL" id="CP000946">
    <property type="protein sequence ID" value="ACA77535.1"/>
    <property type="molecule type" value="Genomic_DNA"/>
</dbReference>
<dbReference type="RefSeq" id="WP_000994971.1">
    <property type="nucleotide sequence ID" value="NZ_MTFT01000006.1"/>
</dbReference>
<dbReference type="SMR" id="B1IPI5"/>
<dbReference type="KEGG" id="ecl:EcolC_1887"/>
<dbReference type="HOGENOM" id="CLU_053835_0_0_6"/>
<dbReference type="UniPathway" id="UPA00185">
    <property type="reaction ID" value="UER00280"/>
</dbReference>
<dbReference type="GO" id="GO:0009015">
    <property type="term" value="F:N-succinylarginine dihydrolase activity"/>
    <property type="evidence" value="ECO:0007669"/>
    <property type="project" value="UniProtKB-UniRule"/>
</dbReference>
<dbReference type="GO" id="GO:0019544">
    <property type="term" value="P:arginine catabolic process to glutamate"/>
    <property type="evidence" value="ECO:0007669"/>
    <property type="project" value="UniProtKB-UniRule"/>
</dbReference>
<dbReference type="GO" id="GO:0019545">
    <property type="term" value="P:arginine catabolic process to succinate"/>
    <property type="evidence" value="ECO:0007669"/>
    <property type="project" value="UniProtKB-UniRule"/>
</dbReference>
<dbReference type="FunFam" id="3.75.10.20:FF:000001">
    <property type="entry name" value="N-succinylarginine dihydrolase"/>
    <property type="match status" value="1"/>
</dbReference>
<dbReference type="Gene3D" id="3.75.10.20">
    <property type="entry name" value="Succinylarginine dihydrolase"/>
    <property type="match status" value="1"/>
</dbReference>
<dbReference type="HAMAP" id="MF_01172">
    <property type="entry name" value="AstB"/>
    <property type="match status" value="1"/>
</dbReference>
<dbReference type="InterPro" id="IPR037031">
    <property type="entry name" value="AstB_sf"/>
</dbReference>
<dbReference type="InterPro" id="IPR007079">
    <property type="entry name" value="SuccinylArg_d-Hdrlase_AstB"/>
</dbReference>
<dbReference type="NCBIfam" id="TIGR03241">
    <property type="entry name" value="arg_catab_astB"/>
    <property type="match status" value="1"/>
</dbReference>
<dbReference type="NCBIfam" id="NF009789">
    <property type="entry name" value="PRK13281.1"/>
    <property type="match status" value="1"/>
</dbReference>
<dbReference type="PANTHER" id="PTHR30420">
    <property type="entry name" value="N-SUCCINYLARGININE DIHYDROLASE"/>
    <property type="match status" value="1"/>
</dbReference>
<dbReference type="PANTHER" id="PTHR30420:SF2">
    <property type="entry name" value="N-SUCCINYLARGININE DIHYDROLASE"/>
    <property type="match status" value="1"/>
</dbReference>
<dbReference type="Pfam" id="PF04996">
    <property type="entry name" value="AstB"/>
    <property type="match status" value="1"/>
</dbReference>
<dbReference type="SUPFAM" id="SSF55909">
    <property type="entry name" value="Pentein"/>
    <property type="match status" value="1"/>
</dbReference>
<gene>
    <name evidence="1" type="primary">astB</name>
    <name type="ordered locus">EcolC_1887</name>
</gene>
<comment type="function">
    <text evidence="1">Catalyzes the hydrolysis of N(2)-succinylarginine into N(2)-succinylornithine, ammonia and CO(2).</text>
</comment>
<comment type="catalytic activity">
    <reaction evidence="1">
        <text>N(2)-succinyl-L-arginine + 2 H2O + 2 H(+) = N(2)-succinyl-L-ornithine + 2 NH4(+) + CO2</text>
        <dbReference type="Rhea" id="RHEA:19533"/>
        <dbReference type="ChEBI" id="CHEBI:15377"/>
        <dbReference type="ChEBI" id="CHEBI:15378"/>
        <dbReference type="ChEBI" id="CHEBI:16526"/>
        <dbReference type="ChEBI" id="CHEBI:28938"/>
        <dbReference type="ChEBI" id="CHEBI:58241"/>
        <dbReference type="ChEBI" id="CHEBI:58514"/>
        <dbReference type="EC" id="3.5.3.23"/>
    </reaction>
</comment>
<comment type="pathway">
    <text evidence="1">Amino-acid degradation; L-arginine degradation via AST pathway; L-glutamate and succinate from L-arginine: step 2/5.</text>
</comment>
<comment type="subunit">
    <text evidence="1">Homodimer.</text>
</comment>
<comment type="similarity">
    <text evidence="1">Belongs to the succinylarginine dihydrolase family.</text>
</comment>
<organism>
    <name type="scientific">Escherichia coli (strain ATCC 8739 / DSM 1576 / NBRC 3972 / NCIMB 8545 / WDCM 00012 / Crooks)</name>
    <dbReference type="NCBI Taxonomy" id="481805"/>
    <lineage>
        <taxon>Bacteria</taxon>
        <taxon>Pseudomonadati</taxon>
        <taxon>Pseudomonadota</taxon>
        <taxon>Gammaproteobacteria</taxon>
        <taxon>Enterobacterales</taxon>
        <taxon>Enterobacteriaceae</taxon>
        <taxon>Escherichia</taxon>
    </lineage>
</organism>
<evidence type="ECO:0000255" key="1">
    <source>
        <dbReference type="HAMAP-Rule" id="MF_01172"/>
    </source>
</evidence>
<proteinExistence type="inferred from homology"/>
<reference key="1">
    <citation type="submission" date="2008-02" db="EMBL/GenBank/DDBJ databases">
        <title>Complete sequence of Escherichia coli C str. ATCC 8739.</title>
        <authorList>
            <person name="Copeland A."/>
            <person name="Lucas S."/>
            <person name="Lapidus A."/>
            <person name="Glavina del Rio T."/>
            <person name="Dalin E."/>
            <person name="Tice H."/>
            <person name="Bruce D."/>
            <person name="Goodwin L."/>
            <person name="Pitluck S."/>
            <person name="Kiss H."/>
            <person name="Brettin T."/>
            <person name="Detter J.C."/>
            <person name="Han C."/>
            <person name="Kuske C.R."/>
            <person name="Schmutz J."/>
            <person name="Larimer F."/>
            <person name="Land M."/>
            <person name="Hauser L."/>
            <person name="Kyrpides N."/>
            <person name="Mikhailova N."/>
            <person name="Ingram L."/>
            <person name="Richardson P."/>
        </authorList>
    </citation>
    <scope>NUCLEOTIDE SEQUENCE [LARGE SCALE GENOMIC DNA]</scope>
    <source>
        <strain>ATCC 8739 / DSM 1576 / NBRC 3972 / NCIMB 8545 / WDCM 00012 / Crooks</strain>
    </source>
</reference>
<sequence>MNAWEVNFDGLVGLTHHYAGLSFGNEASTRHRFQVSNPRLAAKQGLLKMKALADAGFPQAVIPPHERPFIPVLRQLGFSGSDEQVLEKVARQAPHWLSSVSSASPMWVANAATIAPSADTLDGKVHLTVANLNNKFHRSLEAPVTESLLKAIFNDEEKFSVHSALPQVALLGDEGAANHNRLGGHYGEPGMQLFVYGREEGNDTLPSRYPARQTREASEAVARLNQVNPQQVIFAQQNPDVIDQGVFHNDVIAVSNRQVLFCHQQAFARQSQLLANLRARVNGFMAIEVPATQVSVSDAVSTYLFNSQLLSRDDGSMVLVLPQECREHAGVWCYLNELLAADNPISELKVFDLRESMANGGGPACLRLRVVLTQEERRAVNPAVMMNDTLFNALNDWVDRYYRDRLTAADLADPQLLREGREALDVLSQLLNLGSVYPFQREGGGNG</sequence>